<protein>
    <recommendedName>
        <fullName evidence="4">Transcription factor macR</fullName>
    </recommendedName>
    <alternativeName>
        <fullName evidence="4">Macrophorins biosynthesis cluster protein R</fullName>
    </alternativeName>
</protein>
<feature type="chain" id="PRO_0000454093" description="Transcription factor macR">
    <location>
        <begin position="1"/>
        <end position="853"/>
    </location>
</feature>
<feature type="DNA-binding region" description="Zn(2)-C6 fungal-type" evidence="1">
    <location>
        <begin position="18"/>
        <end position="45"/>
    </location>
</feature>
<feature type="region of interest" description="Disordered" evidence="2">
    <location>
        <begin position="54"/>
        <end position="122"/>
    </location>
</feature>
<feature type="region of interest" description="Disordered" evidence="2">
    <location>
        <begin position="138"/>
        <end position="166"/>
    </location>
</feature>
<feature type="region of interest" description="Disordered" evidence="2">
    <location>
        <begin position="734"/>
        <end position="775"/>
    </location>
</feature>
<feature type="region of interest" description="Disordered" evidence="2">
    <location>
        <begin position="833"/>
        <end position="853"/>
    </location>
</feature>
<feature type="compositionally biased region" description="Polar residues" evidence="2">
    <location>
        <begin position="104"/>
        <end position="116"/>
    </location>
</feature>
<feature type="compositionally biased region" description="Polar residues" evidence="2">
    <location>
        <begin position="141"/>
        <end position="163"/>
    </location>
</feature>
<feature type="compositionally biased region" description="Polar residues" evidence="2">
    <location>
        <begin position="738"/>
        <end position="752"/>
    </location>
</feature>
<keyword id="KW-0238">DNA-binding</keyword>
<keyword id="KW-0479">Metal-binding</keyword>
<keyword id="KW-0539">Nucleus</keyword>
<keyword id="KW-0804">Transcription</keyword>
<keyword id="KW-0805">Transcription regulation</keyword>
<keyword id="KW-0862">Zinc</keyword>
<dbReference type="EMBL" id="MF989995">
    <property type="protein sequence ID" value="AVK70096.1"/>
    <property type="molecule type" value="Genomic_DNA"/>
</dbReference>
<dbReference type="EMBL" id="MH388470">
    <property type="protein sequence ID" value="QBC75452.1"/>
    <property type="molecule type" value="Genomic_DNA"/>
</dbReference>
<dbReference type="SMR" id="A0A2P1DP89"/>
<dbReference type="GO" id="GO:0005634">
    <property type="term" value="C:nucleus"/>
    <property type="evidence" value="ECO:0007669"/>
    <property type="project" value="UniProtKB-SubCell"/>
</dbReference>
<dbReference type="GO" id="GO:0003677">
    <property type="term" value="F:DNA binding"/>
    <property type="evidence" value="ECO:0007669"/>
    <property type="project" value="UniProtKB-KW"/>
</dbReference>
<dbReference type="GO" id="GO:0000981">
    <property type="term" value="F:DNA-binding transcription factor activity, RNA polymerase II-specific"/>
    <property type="evidence" value="ECO:0007669"/>
    <property type="project" value="InterPro"/>
</dbReference>
<dbReference type="GO" id="GO:0008270">
    <property type="term" value="F:zinc ion binding"/>
    <property type="evidence" value="ECO:0007669"/>
    <property type="project" value="InterPro"/>
</dbReference>
<dbReference type="GO" id="GO:0006351">
    <property type="term" value="P:DNA-templated transcription"/>
    <property type="evidence" value="ECO:0007669"/>
    <property type="project" value="InterPro"/>
</dbReference>
<dbReference type="CDD" id="cd12148">
    <property type="entry name" value="fungal_TF_MHR"/>
    <property type="match status" value="1"/>
</dbReference>
<dbReference type="CDD" id="cd00067">
    <property type="entry name" value="GAL4"/>
    <property type="match status" value="1"/>
</dbReference>
<dbReference type="Gene3D" id="4.10.240.10">
    <property type="entry name" value="Zn(2)-C6 fungal-type DNA-binding domain"/>
    <property type="match status" value="1"/>
</dbReference>
<dbReference type="InterPro" id="IPR050613">
    <property type="entry name" value="Sec_Metabolite_Reg"/>
</dbReference>
<dbReference type="InterPro" id="IPR007219">
    <property type="entry name" value="Transcription_factor_dom_fun"/>
</dbReference>
<dbReference type="InterPro" id="IPR036864">
    <property type="entry name" value="Zn2-C6_fun-type_DNA-bd_sf"/>
</dbReference>
<dbReference type="InterPro" id="IPR001138">
    <property type="entry name" value="Zn2Cys6_DnaBD"/>
</dbReference>
<dbReference type="PANTHER" id="PTHR31001">
    <property type="entry name" value="UNCHARACTERIZED TRANSCRIPTIONAL REGULATORY PROTEIN"/>
    <property type="match status" value="1"/>
</dbReference>
<dbReference type="PANTHER" id="PTHR31001:SF40">
    <property type="entry name" value="ZN(II)2CYS6 TRANSCRIPTION FACTOR (EUROFUNG)"/>
    <property type="match status" value="1"/>
</dbReference>
<dbReference type="Pfam" id="PF04082">
    <property type="entry name" value="Fungal_trans"/>
    <property type="match status" value="1"/>
</dbReference>
<dbReference type="Pfam" id="PF00172">
    <property type="entry name" value="Zn_clus"/>
    <property type="match status" value="1"/>
</dbReference>
<dbReference type="SMART" id="SM00906">
    <property type="entry name" value="Fungal_trans"/>
    <property type="match status" value="1"/>
</dbReference>
<dbReference type="SMART" id="SM00066">
    <property type="entry name" value="GAL4"/>
    <property type="match status" value="1"/>
</dbReference>
<dbReference type="SUPFAM" id="SSF57701">
    <property type="entry name" value="Zn2/Cys6 DNA-binding domain"/>
    <property type="match status" value="1"/>
</dbReference>
<dbReference type="PROSITE" id="PS00463">
    <property type="entry name" value="ZN2_CY6_FUNGAL_1"/>
    <property type="match status" value="1"/>
</dbReference>
<dbReference type="PROSITE" id="PS50048">
    <property type="entry name" value="ZN2_CY6_FUNGAL_2"/>
    <property type="match status" value="1"/>
</dbReference>
<proteinExistence type="inferred from homology"/>
<evidence type="ECO:0000255" key="1">
    <source>
        <dbReference type="PROSITE-ProRule" id="PRU00227"/>
    </source>
</evidence>
<evidence type="ECO:0000256" key="2">
    <source>
        <dbReference type="SAM" id="MobiDB-lite"/>
    </source>
</evidence>
<evidence type="ECO:0000269" key="3">
    <source>
    </source>
</evidence>
<evidence type="ECO:0000303" key="4">
    <source>
    </source>
</evidence>
<sequence length="853" mass="94426">MPLSEPRQIKKPRLSLSCIVCRRRKVRCGREQPECANCVRMKENCVYRTMVRDESTGRVRPVSPQDKDSRVSTSDARPDLPWPHWGRDTNAPYPDKPSRPPSRPQVSANASPSPQRQEPYPTVPSWEEAIQLPSYRDANAPQINGSSTTTRDPSPAPSTSLFPTPSDHPCRDYLSIRRGGRVRYVGQTFWGFVAGKESLSDDFFDENRHAHPDLPLPHISSMGMFNLLRSLPTKPVSDTLLETFFLAVWPLVPLLHPPSLQADYDEFWEWCRNSENALPSDKLRDDPTLICLLFAVLYCGASAAPAATWANTNLQGLQKETTVSHLKSAYTTSLSLCQHQEHPTLNTLVSNLLTGPFLDRPFEPMRSLVNVSTTVRIAQTMGLHREGAWSALSSVDREIRRRVWWHIVWLDVQSSISTGLTPCCGNEALDAVGMVGTDHVEPSNIPAGLSPPNELVTNRQSVAMLYAIGRFQTARLQARIVAHLQSAHDPSQDGFGELITDSKELLQKIDSLIARVPTQGIPEMGYIPSRLANASPSTQPLLYKDDPSQPTVFSAWTRIMLTLLKSEMAILLQKPFLPPPDSANPQSLKSWTSMAQLCVNYLRIYLQLYQAPAFSPYAWFCCSHYGPLQCVFITLMYLHYFQHSGETTLARYCVDEVIHHCVAQYQAPDPSSTRTSPDDTDSNGGKLRMPLAIQVLVDLHERLDSSLGPEDRAPPLDLIECQARFSMSHLATKASDLRATSDQPSSDVSSTTRTHHNCETPPITTGAPPVAAGNKPVPPNSVFVAGSDSGLDMDFLATISDLEAWSSSLILESDNLLARPDDMTPDHAVITRLGSQSTASGRRGLPDGLDFPG</sequence>
<reference key="1">
    <citation type="journal article" date="2017" name="Org. Lett.">
        <title>Late-stage terpene cyclization by an integral membrane cyclase in the biosynthesis of isoprenoid epoxycyclohexenone natural products.</title>
        <authorList>
            <person name="Tang M.C."/>
            <person name="Cui X."/>
            <person name="He X."/>
            <person name="Ding Z."/>
            <person name="Zhu T."/>
            <person name="Tang Y."/>
            <person name="Li D."/>
        </authorList>
    </citation>
    <scope>NUCLEOTIDE SEQUENCE [GENOMIC DNA]</scope>
    <scope>FUNCTION</scope>
    <scope>PATHWAY</scope>
    <source>
        <strain>LM2</strain>
    </source>
</reference>
<name>MACR_PENTR</name>
<comment type="function">
    <text evidence="3">Transcription factor that regulates the expression of the gene cluster that mediates the biosynthesis of macrophorins, isoprenoid epoxycyclohexenones containing cyclized drimane moieties.</text>
</comment>
<comment type="subcellular location">
    <subcellularLocation>
        <location evidence="1">Nucleus</location>
    </subcellularLocation>
</comment>
<comment type="miscellaneous">
    <text evidence="3">The macrophorins cluster contains a single gene insertion (encoding for the terpene cyclase macJ) compared with the yanuthone cluster that produces the linear compound yanuthone.</text>
</comment>
<accession>A0A2P1DP89</accession>
<gene>
    <name evidence="4" type="primary">macR</name>
</gene>
<organism>
    <name type="scientific">Penicillium terrestre</name>
    <dbReference type="NCBI Taxonomy" id="374132"/>
    <lineage>
        <taxon>Eukaryota</taxon>
        <taxon>Fungi</taxon>
        <taxon>Dikarya</taxon>
        <taxon>Ascomycota</taxon>
        <taxon>Pezizomycotina</taxon>
        <taxon>Eurotiomycetes</taxon>
        <taxon>Eurotiomycetidae</taxon>
        <taxon>Eurotiales</taxon>
        <taxon>Aspergillaceae</taxon>
        <taxon>Penicillium</taxon>
    </lineage>
</organism>